<proteinExistence type="evidence at protein level"/>
<reference key="1">
    <citation type="journal article" date="2005" name="Nature">
        <title>Sequencing of Aspergillus nidulans and comparative analysis with A. fumigatus and A. oryzae.</title>
        <authorList>
            <person name="Galagan J.E."/>
            <person name="Calvo S.E."/>
            <person name="Cuomo C."/>
            <person name="Ma L.-J."/>
            <person name="Wortman J.R."/>
            <person name="Batzoglou S."/>
            <person name="Lee S.-I."/>
            <person name="Bastuerkmen M."/>
            <person name="Spevak C.C."/>
            <person name="Clutterbuck J."/>
            <person name="Kapitonov V."/>
            <person name="Jurka J."/>
            <person name="Scazzocchio C."/>
            <person name="Farman M.L."/>
            <person name="Butler J."/>
            <person name="Purcell S."/>
            <person name="Harris S."/>
            <person name="Braus G.H."/>
            <person name="Draht O."/>
            <person name="Busch S."/>
            <person name="D'Enfert C."/>
            <person name="Bouchier C."/>
            <person name="Goldman G.H."/>
            <person name="Bell-Pedersen D."/>
            <person name="Griffiths-Jones S."/>
            <person name="Doonan J.H."/>
            <person name="Yu J."/>
            <person name="Vienken K."/>
            <person name="Pain A."/>
            <person name="Freitag M."/>
            <person name="Selker E.U."/>
            <person name="Archer D.B."/>
            <person name="Penalva M.A."/>
            <person name="Oakley B.R."/>
            <person name="Momany M."/>
            <person name="Tanaka T."/>
            <person name="Kumagai T."/>
            <person name="Asai K."/>
            <person name="Machida M."/>
            <person name="Nierman W.C."/>
            <person name="Denning D.W."/>
            <person name="Caddick M.X."/>
            <person name="Hynes M."/>
            <person name="Paoletti M."/>
            <person name="Fischer R."/>
            <person name="Miller B.L."/>
            <person name="Dyer P.S."/>
            <person name="Sachs M.S."/>
            <person name="Osmani S.A."/>
            <person name="Birren B.W."/>
        </authorList>
    </citation>
    <scope>NUCLEOTIDE SEQUENCE [LARGE SCALE GENOMIC DNA]</scope>
    <source>
        <strain>FGSC A4 / ATCC 38163 / CBS 112.46 / NRRL 194 / M139</strain>
    </source>
</reference>
<reference key="2">
    <citation type="journal article" date="2009" name="Fungal Genet. Biol.">
        <title>The 2008 update of the Aspergillus nidulans genome annotation: a community effort.</title>
        <authorList>
            <person name="Wortman J.R."/>
            <person name="Gilsenan J.M."/>
            <person name="Joardar V."/>
            <person name="Deegan J."/>
            <person name="Clutterbuck J."/>
            <person name="Andersen M.R."/>
            <person name="Archer D."/>
            <person name="Bencina M."/>
            <person name="Braus G."/>
            <person name="Coutinho P."/>
            <person name="von Dohren H."/>
            <person name="Doonan J."/>
            <person name="Driessen A.J."/>
            <person name="Durek P."/>
            <person name="Espeso E."/>
            <person name="Fekete E."/>
            <person name="Flipphi M."/>
            <person name="Estrada C.G."/>
            <person name="Geysens S."/>
            <person name="Goldman G."/>
            <person name="de Groot P.W."/>
            <person name="Hansen K."/>
            <person name="Harris S.D."/>
            <person name="Heinekamp T."/>
            <person name="Helmstaedt K."/>
            <person name="Henrissat B."/>
            <person name="Hofmann G."/>
            <person name="Homan T."/>
            <person name="Horio T."/>
            <person name="Horiuchi H."/>
            <person name="James S."/>
            <person name="Jones M."/>
            <person name="Karaffa L."/>
            <person name="Karanyi Z."/>
            <person name="Kato M."/>
            <person name="Keller N."/>
            <person name="Kelly D.E."/>
            <person name="Kiel J.A."/>
            <person name="Kim J.M."/>
            <person name="van der Klei I.J."/>
            <person name="Klis F.M."/>
            <person name="Kovalchuk A."/>
            <person name="Krasevec N."/>
            <person name="Kubicek C.P."/>
            <person name="Liu B."/>
            <person name="Maccabe A."/>
            <person name="Meyer V."/>
            <person name="Mirabito P."/>
            <person name="Miskei M."/>
            <person name="Mos M."/>
            <person name="Mullins J."/>
            <person name="Nelson D.R."/>
            <person name="Nielsen J."/>
            <person name="Oakley B.R."/>
            <person name="Osmani S.A."/>
            <person name="Pakula T."/>
            <person name="Paszewski A."/>
            <person name="Paulsen I."/>
            <person name="Pilsyk S."/>
            <person name="Pocsi I."/>
            <person name="Punt P.J."/>
            <person name="Ram A.F."/>
            <person name="Ren Q."/>
            <person name="Robellet X."/>
            <person name="Robson G."/>
            <person name="Seiboth B."/>
            <person name="van Solingen P."/>
            <person name="Specht T."/>
            <person name="Sun J."/>
            <person name="Taheri-Talesh N."/>
            <person name="Takeshita N."/>
            <person name="Ussery D."/>
            <person name="vanKuyk P.A."/>
            <person name="Visser H."/>
            <person name="van de Vondervoort P.J."/>
            <person name="de Vries R.P."/>
            <person name="Walton J."/>
            <person name="Xiang X."/>
            <person name="Xiong Y."/>
            <person name="Zeng A.P."/>
            <person name="Brandt B.W."/>
            <person name="Cornell M.J."/>
            <person name="van den Hondel C.A."/>
            <person name="Visser J."/>
            <person name="Oliver S.G."/>
            <person name="Turner G."/>
        </authorList>
    </citation>
    <scope>GENOME REANNOTATION</scope>
    <source>
        <strain>FGSC A4 / ATCC 38163 / CBS 112.46 / NRRL 194 / M139</strain>
    </source>
</reference>
<reference key="3">
    <citation type="journal article" date="2008" name="Appl. Environ. Microbiol.">
        <title>Identification and characterization of the asperthecin gene cluster of Aspergillus nidulans.</title>
        <authorList>
            <person name="Szewczyk E."/>
            <person name="Chiang Y.M."/>
            <person name="Oakley C.E."/>
            <person name="Davidson A.D."/>
            <person name="Wang C.C."/>
            <person name="Oakley B.R."/>
        </authorList>
    </citation>
    <scope>FUNCTION</scope>
    <scope>DISRUPTION PHENOTYPE</scope>
</reference>
<reference key="4">
    <citation type="journal article" date="2011" name="J. Am. Chem. Soc.">
        <title>Comparative characterization of fungal anthracenone and naphthacenedione biosynthetic pathways reveals an alpha-hydroxylation-dependent Claisen-like cyclization catalyzed by a dimanganese thioesterase.</title>
        <authorList>
            <person name="Li Y."/>
            <person name="Chooi Y.H."/>
            <person name="Sheng Y."/>
            <person name="Valentine J.S."/>
            <person name="Tang Y."/>
        </authorList>
    </citation>
    <scope>FUNCTION</scope>
    <scope>CATALYTIC ACTIVITY</scope>
</reference>
<reference key="5">
    <citation type="journal article" date="2016" name="Fungal Genet. Biol.">
        <title>Changes of global gene expression and secondary metabolite accumulation during light-dependent Aspergillus nidulans development.</title>
        <authorList>
            <person name="Bayram O."/>
            <person name="Feussner K."/>
            <person name="Dumkow M."/>
            <person name="Herrfurth C."/>
            <person name="Feussner I."/>
            <person name="Braus G.H."/>
        </authorList>
    </citation>
    <scope>INDUCTION</scope>
</reference>
<accession>Q5B0C8</accession>
<accession>C8V344</accession>
<evidence type="ECO:0000250" key="1">
    <source>
        <dbReference type="UniProtKB" id="B8M9J8"/>
    </source>
</evidence>
<evidence type="ECO:0000255" key="2"/>
<evidence type="ECO:0000269" key="3">
    <source>
    </source>
</evidence>
<evidence type="ECO:0000269" key="4">
    <source>
    </source>
</evidence>
<evidence type="ECO:0000269" key="5">
    <source>
    </source>
</evidence>
<evidence type="ECO:0000303" key="6">
    <source>
    </source>
</evidence>
<evidence type="ECO:0000305" key="7"/>
<keyword id="KW-0274">FAD</keyword>
<keyword id="KW-0285">Flavoprotein</keyword>
<keyword id="KW-0503">Monooxygenase</keyword>
<keyword id="KW-0560">Oxidoreductase</keyword>
<keyword id="KW-1185">Reference proteome</keyword>
<keyword id="KW-0732">Signal</keyword>
<protein>
    <recommendedName>
        <fullName evidence="6">FAD-dependent monooxygenase aptC</fullName>
        <ecNumber evidence="4 6">1.14.14.-</ecNumber>
    </recommendedName>
    <alternativeName>
        <fullName evidence="6">Asperthecin synthesis protein C</fullName>
    </alternativeName>
</protein>
<dbReference type="EC" id="1.14.14.-" evidence="4 6"/>
<dbReference type="EMBL" id="BN001301">
    <property type="protein sequence ID" value="CBF70383.1"/>
    <property type="molecule type" value="Genomic_DNA"/>
</dbReference>
<dbReference type="EMBL" id="AACD01000102">
    <property type="protein sequence ID" value="EAA57751.1"/>
    <property type="molecule type" value="Genomic_DNA"/>
</dbReference>
<dbReference type="RefSeq" id="XP_663606.1">
    <property type="nucleotide sequence ID" value="XM_658514.1"/>
</dbReference>
<dbReference type="SMR" id="Q5B0C8"/>
<dbReference type="STRING" id="227321.Q5B0C8"/>
<dbReference type="EnsemblFungi" id="CBF70383">
    <property type="protein sequence ID" value="CBF70383"/>
    <property type="gene ID" value="ANIA_06002"/>
</dbReference>
<dbReference type="KEGG" id="ani:ANIA_06002"/>
<dbReference type="VEuPathDB" id="FungiDB:AN6002"/>
<dbReference type="eggNOG" id="KOG2614">
    <property type="taxonomic scope" value="Eukaryota"/>
</dbReference>
<dbReference type="HOGENOM" id="CLU_040697_0_0_1"/>
<dbReference type="InParanoid" id="Q5B0C8"/>
<dbReference type="OMA" id="IPLIHYH"/>
<dbReference type="OrthoDB" id="47494at2759"/>
<dbReference type="Proteomes" id="UP000000560">
    <property type="component" value="Chromosome I"/>
</dbReference>
<dbReference type="GO" id="GO:0004497">
    <property type="term" value="F:monooxygenase activity"/>
    <property type="evidence" value="ECO:0007669"/>
    <property type="project" value="UniProtKB-KW"/>
</dbReference>
<dbReference type="GO" id="GO:0036184">
    <property type="term" value="P:asperthecin biosynthetic process"/>
    <property type="evidence" value="ECO:0000315"/>
    <property type="project" value="AspGD"/>
</dbReference>
<dbReference type="GO" id="GO:0044550">
    <property type="term" value="P:secondary metabolite biosynthetic process"/>
    <property type="evidence" value="ECO:0000318"/>
    <property type="project" value="GO_Central"/>
</dbReference>
<dbReference type="Gene3D" id="3.50.50.60">
    <property type="entry name" value="FAD/NAD(P)-binding domain"/>
    <property type="match status" value="1"/>
</dbReference>
<dbReference type="InterPro" id="IPR036188">
    <property type="entry name" value="FAD/NAD-bd_sf"/>
</dbReference>
<dbReference type="PANTHER" id="PTHR47178:SF4">
    <property type="entry name" value="FAD-DEPENDENT MONOOXYGENASE APTC"/>
    <property type="match status" value="1"/>
</dbReference>
<dbReference type="PANTHER" id="PTHR47178">
    <property type="entry name" value="MONOOXYGENASE, FAD-BINDING"/>
    <property type="match status" value="1"/>
</dbReference>
<dbReference type="PRINTS" id="PR00420">
    <property type="entry name" value="RNGMNOXGNASE"/>
</dbReference>
<dbReference type="SUPFAM" id="SSF51905">
    <property type="entry name" value="FAD/NAD(P)-binding domain"/>
    <property type="match status" value="1"/>
</dbReference>
<feature type="signal peptide" evidence="2">
    <location>
        <begin position="1"/>
        <end position="18"/>
    </location>
</feature>
<feature type="chain" id="PRO_5006744329" description="FAD-dependent monooxygenase aptC">
    <location>
        <begin position="19"/>
        <end position="417"/>
    </location>
</feature>
<feature type="binding site" evidence="1">
    <location>
        <position position="32"/>
    </location>
    <ligand>
        <name>FAD</name>
        <dbReference type="ChEBI" id="CHEBI:57692"/>
    </ligand>
</feature>
<feature type="binding site" evidence="1">
    <location>
        <position position="43"/>
    </location>
    <ligand>
        <name>FAD</name>
        <dbReference type="ChEBI" id="CHEBI:57692"/>
    </ligand>
</feature>
<feature type="binding site" evidence="1">
    <location>
        <position position="117"/>
    </location>
    <ligand>
        <name>FAD</name>
        <dbReference type="ChEBI" id="CHEBI:57692"/>
    </ligand>
</feature>
<feature type="binding site" evidence="1">
    <location>
        <position position="332"/>
    </location>
    <ligand>
        <name>FAD</name>
        <dbReference type="ChEBI" id="CHEBI:57692"/>
    </ligand>
</feature>
<feature type="binding site" evidence="1">
    <location>
        <position position="345"/>
    </location>
    <ligand>
        <name>FAD</name>
        <dbReference type="ChEBI" id="CHEBI:57692"/>
    </ligand>
</feature>
<name>APTC_EMENI</name>
<organism>
    <name type="scientific">Emericella nidulans (strain FGSC A4 / ATCC 38163 / CBS 112.46 / NRRL 194 / M139)</name>
    <name type="common">Aspergillus nidulans</name>
    <dbReference type="NCBI Taxonomy" id="227321"/>
    <lineage>
        <taxon>Eukaryota</taxon>
        <taxon>Fungi</taxon>
        <taxon>Dikarya</taxon>
        <taxon>Ascomycota</taxon>
        <taxon>Pezizomycotina</taxon>
        <taxon>Eurotiomycetes</taxon>
        <taxon>Eurotiomycetidae</taxon>
        <taxon>Eurotiales</taxon>
        <taxon>Aspergillaceae</taxon>
        <taxon>Aspergillus</taxon>
        <taxon>Aspergillus subgen. Nidulantes</taxon>
    </lineage>
</organism>
<gene>
    <name evidence="6" type="primary">aptC</name>
    <name type="ORF">AN6002</name>
</gene>
<comment type="function">
    <text evidence="3 4">FAD-dependent monooxygenase; part of the gene cluster that mediates the biosynthesis of asperthecin, an anthraquinone pigment (PubMed:18978088, PubMed:21866960). Polyketide synthase (PKS) aptA catalyzes the formation of the aromatic polyketide from acetyl coenzyme A and seven malonyl coenzyme A molecules (PubMed:18978088). Polyketide is subsequently hydrolyzed by the action of the hydrolase aptB into endocrocin-9-anthrone (PubMed:18978088). Endocrocin-9-anthrone is then oxidized into endocrocin by the monooxygenase aptC (PubMed:18978088). Endocrocin is likely to decarboxylate spontaneously to form emodin which explains why there is no decarboxylase in the asperthecin biosynthesis cluster (PubMed:18978088). Finally, aptC or another endogenous oxygenase catalyzes additional oxidation steps to form asperthecin (PubMed:18978088).</text>
</comment>
<comment type="catalytic activity">
    <reaction evidence="4">
        <text>3,6,8,9-tetrahydroxy-1-oxo-3-(2-oxopropyl)-1,2,3,4-tetrahydroanthracene-2-carboxyl-[ACP] + NADPH + O2 + H(+) = 2,3,6,8,9-pentahydroxy-1-oxo-3-(2-oxopropyl)-1,2,3,4-tetrahydroanthracene-2-carboxyl-[ACP] + NADP(+) + H2O</text>
        <dbReference type="Rhea" id="RHEA:64076"/>
        <dbReference type="Rhea" id="RHEA-COMP:16516"/>
        <dbReference type="Rhea" id="RHEA-COMP:16517"/>
        <dbReference type="ChEBI" id="CHEBI:15377"/>
        <dbReference type="ChEBI" id="CHEBI:15378"/>
        <dbReference type="ChEBI" id="CHEBI:15379"/>
        <dbReference type="ChEBI" id="CHEBI:57783"/>
        <dbReference type="ChEBI" id="CHEBI:58349"/>
        <dbReference type="ChEBI" id="CHEBI:149685"/>
        <dbReference type="ChEBI" id="CHEBI:149686"/>
    </reaction>
    <physiologicalReaction direction="left-to-right" evidence="4">
        <dbReference type="Rhea" id="RHEA:64077"/>
    </physiologicalReaction>
</comment>
<comment type="cofactor">
    <cofactor evidence="7">
        <name>FAD</name>
        <dbReference type="ChEBI" id="CHEBI:57692"/>
    </cofactor>
</comment>
<comment type="pathway">
    <text evidence="3">Secondary metabolite biosynthesis.</text>
</comment>
<comment type="induction">
    <text evidence="5">Expression is induced during late sexual development in the dark (PubMed:26773375).</text>
</comment>
<comment type="disruption phenotype">
    <text evidence="3">Fails to produce asperthecin (PubMed:18978088).</text>
</comment>
<comment type="similarity">
    <text evidence="7">Belongs to the paxM FAD-dependent monooxygenase family.</text>
</comment>
<sequence length="417" mass="46258">MTLPVLIIGAGLSGLTTARLLTNAHIPCIVFEASPPSRTQGYAISLRDWGFNALLRALGNLPLSSLTRAVAPDRHIGGWGWLDQSWRNNQTGEIIMMPPKESKEKPTILRANRNALRQWIADAGVGEDEEIDVRYGHRLVGVQLLREGGDGNVVTAEFANGATYTGSLLIAADGVHSTVRTLILPAVKPEILPVLVYHGDFKLSREEYECVIRPHAGESTIVAGVGDGFNTPLTVCDVTSTTVHMDWTYSRPSIGDNDPLYNPNITSEEAKVIPEALIEEINAKKLGEPWSLFLNGEAMRRHRVFNWLTRCVSMERSDVNSCTGKGVVFVGDSWHAMPIFGGEGGNHAIFDGIELAKMLEVAWGRSKEDVQAAIGKYYDKSWRRCNDAVRRSKQRFYQLHRPISEWIEIAEKQKMRA</sequence>